<gene>
    <name evidence="1 4" type="primary">murF</name>
    <name evidence="5" type="ordered locus">SACOL2073</name>
</gene>
<protein>
    <recommendedName>
        <fullName evidence="1">UDP-N-acetylmuramoyl-tripeptide--D-alanyl-D-alanine ligase</fullName>
        <ecNumber evidence="1">6.3.2.10</ecNumber>
    </recommendedName>
    <alternativeName>
        <fullName evidence="1">D-alanyl-D-alanine-adding enzyme</fullName>
    </alternativeName>
</protein>
<dbReference type="EC" id="6.3.2.10" evidence="1"/>
<dbReference type="EMBL" id="CP000046">
    <property type="protein sequence ID" value="AAW37035.1"/>
    <property type="molecule type" value="Genomic_DNA"/>
</dbReference>
<dbReference type="RefSeq" id="WP_000611465.1">
    <property type="nucleotide sequence ID" value="NZ_JBGOFO010000007.1"/>
</dbReference>
<dbReference type="SMR" id="A0A0H2WWP1"/>
<dbReference type="BindingDB" id="A0A0H2WWP1"/>
<dbReference type="KEGG" id="sac:SACOL2073"/>
<dbReference type="HOGENOM" id="CLU_031507_4_0_9"/>
<dbReference type="UniPathway" id="UPA00219"/>
<dbReference type="Proteomes" id="UP000000530">
    <property type="component" value="Chromosome"/>
</dbReference>
<dbReference type="GO" id="GO:0005737">
    <property type="term" value="C:cytoplasm"/>
    <property type="evidence" value="ECO:0007669"/>
    <property type="project" value="UniProtKB-SubCell"/>
</dbReference>
<dbReference type="GO" id="GO:0005524">
    <property type="term" value="F:ATP binding"/>
    <property type="evidence" value="ECO:0007669"/>
    <property type="project" value="UniProtKB-UniRule"/>
</dbReference>
<dbReference type="GO" id="GO:0047480">
    <property type="term" value="F:UDP-N-acetylmuramoyl-tripeptide-D-alanyl-D-alanine ligase activity"/>
    <property type="evidence" value="ECO:0007669"/>
    <property type="project" value="UniProtKB-UniRule"/>
</dbReference>
<dbReference type="GO" id="GO:0051301">
    <property type="term" value="P:cell division"/>
    <property type="evidence" value="ECO:0007669"/>
    <property type="project" value="UniProtKB-KW"/>
</dbReference>
<dbReference type="GO" id="GO:0071555">
    <property type="term" value="P:cell wall organization"/>
    <property type="evidence" value="ECO:0007669"/>
    <property type="project" value="UniProtKB-KW"/>
</dbReference>
<dbReference type="GO" id="GO:0009252">
    <property type="term" value="P:peptidoglycan biosynthetic process"/>
    <property type="evidence" value="ECO:0007669"/>
    <property type="project" value="UniProtKB-UniRule"/>
</dbReference>
<dbReference type="GO" id="GO:0008360">
    <property type="term" value="P:regulation of cell shape"/>
    <property type="evidence" value="ECO:0007669"/>
    <property type="project" value="UniProtKB-KW"/>
</dbReference>
<dbReference type="Gene3D" id="3.90.190.20">
    <property type="entry name" value="Mur ligase, C-terminal domain"/>
    <property type="match status" value="1"/>
</dbReference>
<dbReference type="Gene3D" id="3.40.1190.10">
    <property type="entry name" value="Mur-like, catalytic domain"/>
    <property type="match status" value="1"/>
</dbReference>
<dbReference type="Gene3D" id="3.40.1390.10">
    <property type="entry name" value="MurE/MurF, N-terminal domain"/>
    <property type="match status" value="1"/>
</dbReference>
<dbReference type="HAMAP" id="MF_02019">
    <property type="entry name" value="MurF"/>
    <property type="match status" value="1"/>
</dbReference>
<dbReference type="InterPro" id="IPR036565">
    <property type="entry name" value="Mur-like_cat_sf"/>
</dbReference>
<dbReference type="InterPro" id="IPR004101">
    <property type="entry name" value="Mur_ligase_C"/>
</dbReference>
<dbReference type="InterPro" id="IPR036615">
    <property type="entry name" value="Mur_ligase_C_dom_sf"/>
</dbReference>
<dbReference type="InterPro" id="IPR013221">
    <property type="entry name" value="Mur_ligase_cen"/>
</dbReference>
<dbReference type="InterPro" id="IPR000713">
    <property type="entry name" value="Mur_ligase_N"/>
</dbReference>
<dbReference type="InterPro" id="IPR051046">
    <property type="entry name" value="MurCDEF_CellWall_CoF430Synth"/>
</dbReference>
<dbReference type="InterPro" id="IPR035911">
    <property type="entry name" value="MurE/MurF_N"/>
</dbReference>
<dbReference type="InterPro" id="IPR005863">
    <property type="entry name" value="UDP-N-AcMur_synth"/>
</dbReference>
<dbReference type="NCBIfam" id="TIGR01143">
    <property type="entry name" value="murF"/>
    <property type="match status" value="1"/>
</dbReference>
<dbReference type="PANTHER" id="PTHR43024">
    <property type="entry name" value="UDP-N-ACETYLMURAMOYL-TRIPEPTIDE--D-ALANYL-D-ALANINE LIGASE"/>
    <property type="match status" value="1"/>
</dbReference>
<dbReference type="PANTHER" id="PTHR43024:SF1">
    <property type="entry name" value="UDP-N-ACETYLMURAMOYL-TRIPEPTIDE--D-ALANYL-D-ALANINE LIGASE"/>
    <property type="match status" value="1"/>
</dbReference>
<dbReference type="Pfam" id="PF01225">
    <property type="entry name" value="Mur_ligase"/>
    <property type="match status" value="1"/>
</dbReference>
<dbReference type="Pfam" id="PF02875">
    <property type="entry name" value="Mur_ligase_C"/>
    <property type="match status" value="1"/>
</dbReference>
<dbReference type="Pfam" id="PF08245">
    <property type="entry name" value="Mur_ligase_M"/>
    <property type="match status" value="1"/>
</dbReference>
<dbReference type="SUPFAM" id="SSF53623">
    <property type="entry name" value="MurD-like peptide ligases, catalytic domain"/>
    <property type="match status" value="1"/>
</dbReference>
<dbReference type="SUPFAM" id="SSF53244">
    <property type="entry name" value="MurD-like peptide ligases, peptide-binding domain"/>
    <property type="match status" value="1"/>
</dbReference>
<dbReference type="SUPFAM" id="SSF63418">
    <property type="entry name" value="MurE/MurF N-terminal domain"/>
    <property type="match status" value="1"/>
</dbReference>
<sequence>MINVTLKQIQSWIPCEIEDQFLNQEINGVTIDSRAISKNMLFIPFKGENVDGHRFVSKALQDGAGAAFYQRGTPIDENVSGPIIWVEDTLTALQQLAQAYLRHVNPKVIAVTGSNGKTTTKDMIESVLHTEFKVKKTQGNYNNEIGLPLTILELDNDTEISILEMGMSGFHEIEFLSNLAQPDIAVITNIGESHMQDLGSREGIAKAKSEITIGLKDNGTFIYDGDEPLLKPHVKEVENAKCISIGVATDNALVCSVDDRDTTGISFTINNKEHYDLPILGKHNMKNATIAIAVGHELGLTYNTIYQNLKNVSLTGMRMEQHTLENDITVINDAYNASPTSMRAAIDTLSTLTGRRILILGDVLELGENSKEMHIGVGNYLEEKHIDVLYTFGNEAKYIYDSGQQHVEKAQHFNSKDDMIEVLINDLKAHDRVLVKGSRGMKLEEVVNALIS</sequence>
<organism>
    <name type="scientific">Staphylococcus aureus (strain COL)</name>
    <dbReference type="NCBI Taxonomy" id="93062"/>
    <lineage>
        <taxon>Bacteria</taxon>
        <taxon>Bacillati</taxon>
        <taxon>Bacillota</taxon>
        <taxon>Bacilli</taxon>
        <taxon>Bacillales</taxon>
        <taxon>Staphylococcaceae</taxon>
        <taxon>Staphylococcus</taxon>
    </lineage>
</organism>
<keyword id="KW-0067">ATP-binding</keyword>
<keyword id="KW-0131">Cell cycle</keyword>
<keyword id="KW-0132">Cell division</keyword>
<keyword id="KW-0133">Cell shape</keyword>
<keyword id="KW-0961">Cell wall biogenesis/degradation</keyword>
<keyword id="KW-0963">Cytoplasm</keyword>
<keyword id="KW-0436">Ligase</keyword>
<keyword id="KW-0547">Nucleotide-binding</keyword>
<keyword id="KW-0573">Peptidoglycan synthesis</keyword>
<comment type="function">
    <text evidence="1 2 3">Involved in cell wall formation. Catalyzes the final step in the synthesis of UDP-N-acetylmuramoyl-pentapeptide, the precursor of murein (By similarity). Is essential for the optimal expression of methicillin resistance (PubMed:12959401). May also be involved in the control of cell division (PubMed:16547042).</text>
</comment>
<comment type="catalytic activity">
    <reaction evidence="1">
        <text>UDP-N-acetyl-alpha-D-muramoyl-L-alanyl-gamma-D-glutamyl-L-lysine + D-alanyl-D-alanine + ATP = UDP-N-acetyl-alpha-D-muramoyl-L-alanyl-gamma-D-glutamyl-L-lysyl-D-alanyl-D-alanine + ADP + phosphate + H(+)</text>
        <dbReference type="Rhea" id="RHEA:16085"/>
        <dbReference type="ChEBI" id="CHEBI:15378"/>
        <dbReference type="ChEBI" id="CHEBI:30616"/>
        <dbReference type="ChEBI" id="CHEBI:43474"/>
        <dbReference type="ChEBI" id="CHEBI:57822"/>
        <dbReference type="ChEBI" id="CHEBI:70758"/>
        <dbReference type="ChEBI" id="CHEBI:83903"/>
        <dbReference type="ChEBI" id="CHEBI:456216"/>
        <dbReference type="EC" id="6.3.2.10"/>
    </reaction>
</comment>
<comment type="pathway">
    <text evidence="1">Cell wall biogenesis; peptidoglycan biosynthesis.</text>
</comment>
<comment type="subcellular location">
    <subcellularLocation>
        <location evidence="1">Cytoplasm</location>
    </subcellularLocation>
</comment>
<comment type="disruption phenotype">
    <text evidence="2 3">Disruption of the gene decreases resistance to beta-lactam antibiotics such as oxacillin (PubMed:12959401). Does not affect susceptibility to D-cycloserine, fosfomycin, beta-D-chloro-alanine, moenomycin, bacitracin or vancomycin (PubMed:12959401). Mutant shows abnormalities in the composition of cell wall peptidoglycan and cell wall precursor pool (PubMed:12959401, PubMed:16547042). Transcription of mecA is substantially reduced in the mutant (PubMed:12959401).</text>
</comment>
<comment type="similarity">
    <text evidence="1">Belongs to the MurCDEF family. MurF subfamily.</text>
</comment>
<name>MURF_STAAC</name>
<accession>A0A0H2WWP1</accession>
<reference key="1">
    <citation type="journal article" date="2005" name="J. Bacteriol.">
        <title>Insights on evolution of virulence and resistance from the complete genome analysis of an early methicillin-resistant Staphylococcus aureus strain and a biofilm-producing methicillin-resistant Staphylococcus epidermidis strain.</title>
        <authorList>
            <person name="Gill S.R."/>
            <person name="Fouts D.E."/>
            <person name="Archer G.L."/>
            <person name="Mongodin E.F."/>
            <person name="DeBoy R.T."/>
            <person name="Ravel J."/>
            <person name="Paulsen I.T."/>
            <person name="Kolonay J.F."/>
            <person name="Brinkac L.M."/>
            <person name="Beanan M.J."/>
            <person name="Dodson R.J."/>
            <person name="Daugherty S.C."/>
            <person name="Madupu R."/>
            <person name="Angiuoli S.V."/>
            <person name="Durkin A.S."/>
            <person name="Haft D.H."/>
            <person name="Vamathevan J.J."/>
            <person name="Khouri H."/>
            <person name="Utterback T.R."/>
            <person name="Lee C."/>
            <person name="Dimitrov G."/>
            <person name="Jiang L."/>
            <person name="Qin H."/>
            <person name="Weidman J."/>
            <person name="Tran K."/>
            <person name="Kang K.H."/>
            <person name="Hance I.R."/>
            <person name="Nelson K.E."/>
            <person name="Fraser C.M."/>
        </authorList>
    </citation>
    <scope>NUCLEOTIDE SEQUENCE [LARGE SCALE GENOMIC DNA]</scope>
    <source>
        <strain>COL</strain>
    </source>
</reference>
<reference key="2">
    <citation type="journal article" date="2003" name="Microb. Drug Resist.">
        <title>Normally functioning murF is essential for the optimal expression of methicillin resistance in Staphylococcus aureus.</title>
        <authorList>
            <person name="Sobral R.G."/>
            <person name="Ludovice A.M."/>
            <person name="Gardete S."/>
            <person name="Tabei K."/>
            <person name="De Lencastre H."/>
            <person name="Tomasz A."/>
        </authorList>
    </citation>
    <scope>FUNCTION</scope>
    <scope>DISRUPTION PHENOTYPE</scope>
    <source>
        <strain>COL</strain>
    </source>
</reference>
<reference key="3">
    <citation type="journal article" date="2006" name="J. Bacteriol.">
        <title>Role of murF in cell wall biosynthesis: isolation and characterization of a murF conditional mutant of Staphylococcus aureus.</title>
        <authorList>
            <person name="Sobral R.G."/>
            <person name="Ludovice A.M."/>
            <person name="de Lencastre H."/>
            <person name="Tomasz A."/>
        </authorList>
    </citation>
    <scope>FUNCTION</scope>
    <scope>DISRUPTION PHENOTYPE</scope>
    <source>
        <strain>COL</strain>
    </source>
</reference>
<feature type="chain" id="PRO_0000457175" description="UDP-N-acetylmuramoyl-tripeptide--D-alanyl-D-alanine ligase">
    <location>
        <begin position="1"/>
        <end position="452"/>
    </location>
</feature>
<feature type="binding site" evidence="1">
    <location>
        <begin position="113"/>
        <end position="119"/>
    </location>
    <ligand>
        <name>ATP</name>
        <dbReference type="ChEBI" id="CHEBI:30616"/>
    </ligand>
</feature>
<evidence type="ECO:0000255" key="1">
    <source>
        <dbReference type="HAMAP-Rule" id="MF_02019"/>
    </source>
</evidence>
<evidence type="ECO:0000269" key="2">
    <source>
    </source>
</evidence>
<evidence type="ECO:0000269" key="3">
    <source>
    </source>
</evidence>
<evidence type="ECO:0000303" key="4">
    <source>
    </source>
</evidence>
<evidence type="ECO:0000312" key="5">
    <source>
        <dbReference type="EMBL" id="AAW37035.1"/>
    </source>
</evidence>
<proteinExistence type="inferred from homology"/>